<keyword id="KW-0167">Capsid protein</keyword>
<keyword id="KW-1176">Cytoplasmic inwards viral transport</keyword>
<keyword id="KW-1015">Disulfide bond</keyword>
<keyword id="KW-0238">DNA-binding</keyword>
<keyword id="KW-1039">Host endosome</keyword>
<keyword id="KW-1040">Host Golgi apparatus</keyword>
<keyword id="KW-1048">Host nucleus</keyword>
<keyword id="KW-0945">Host-virus interaction</keyword>
<keyword id="KW-0426">Late protein</keyword>
<keyword id="KW-1177">Microtubular inwards viral transport</keyword>
<keyword id="KW-0597">Phosphoprotein</keyword>
<keyword id="KW-1163">Viral penetration into host nucleus</keyword>
<keyword id="KW-0946">Virion</keyword>
<keyword id="KW-1160">Virus entry into host cell</keyword>
<comment type="function">
    <text evidence="1">Minor protein of the capsid that localizes along the inner surface of the virion, within the central cavities beneath the L1 pentamers. Plays a role in capsid stabilization through interaction with the major capsid protein L1. Once the virion enters the host cell, L2 escorts the genomic DNA into the nucleus by promoting escape from the endosomal compartments and traffic through the host Golgi network. Mechanistically, the C-terminus of L2 possesses a cell-penetrating peptide that protudes from the host endosome, interacts with host cytoplasmic retromer cargo and thereby mediates the capsid delivery to the host trans-Golgi network. Plays a role through its interaction with host dynein in the intracellular microtubule-dependent transport of viral capsid toward the nucleus. Mediates the viral genome import into the nucleus through binding to host importins. Once within the nucleus, L2 localizes viral genomes to host PML bodies in order to activate early gene expression for establishment of infection. Later on, promotes late gene expression by interacting with the viral E2 protein and by inhibiting its transcriptional activation functions. During virion assembly, encapsidates the genome by direct interaction with the viral DNA.</text>
</comment>
<comment type="subunit">
    <text evidence="1">Interacts with major capsid protein L1. Interacts with E2; this interaction inhibits E2 transcriptional activity but not the DNA replication function E2. Interacts with host GADD45GIP1. Interacts with host HSPA8; this interaction is required for L2 nuclear translocation. Interacts with host importins KPNB2 and KPNB3. Forms a complex with importin alpha2-beta1 heterodimers via interaction with the importin alpha2 adapter. Interacts with host DYNLT1; this interaction is essential for virus intracellular transport during entry. Interacts (via C-terminus) with host retromer subunits VPS35 and VPS29.</text>
</comment>
<comment type="subcellular location">
    <subcellularLocation>
        <location evidence="1">Virion</location>
    </subcellularLocation>
    <subcellularLocation>
        <location evidence="1">Host nucleus</location>
    </subcellularLocation>
    <subcellularLocation>
        <location evidence="1">Host early endosome</location>
    </subcellularLocation>
    <subcellularLocation>
        <location evidence="1">Host Golgi apparatus</location>
    </subcellularLocation>
</comment>
<comment type="PTM">
    <text evidence="1">Highly phosphorylated.</text>
</comment>
<comment type="similarity">
    <text evidence="1">Belongs to the papillomaviridae L2 protein family.</text>
</comment>
<sequence>MVATRARRRKRASVTQLYSTCKAAGTCPPDVVNKVEGTTLADKILQWSGLGIFLGGLGIGTGSGSGGRTGYIPLGGGGRPGVVDIAPARPPIIIDLWHHTEPSIVNLVEDSSIIQSGSPIPTFTGTDGFEITSSSTTTPAVLDITPSAGTVHVSSTNIENPLYIEPPSIEAPQSGEVSDIYLLVHYSGTHGYEEIPMEVFASNVSTGTEPISSTPTPGVSRIAAPRLYSKSYTQVKVTNPDFISKPSTFVTFNNPAFEPIDTSITFEEPDAVAPDPDFLDIITLHRPALTSRRGTVRFSRLGQKATMRTRSGKQIGARVHYYHDISRIAPADELEMQPLLSPSNNYSYDIYADLDEAETGFIQPTHTTPMSHSSLSRQLPSLSSSMSSSYANVTIPFSTTYSVPIHTGPDVVLPTSPTVWPYVPHTSIDTKHSIVILGGDYYLWPYTHLLRKRRKRIPYFFTDGIVAH</sequence>
<evidence type="ECO:0000255" key="1">
    <source>
        <dbReference type="HAMAP-Rule" id="MF_04003"/>
    </source>
</evidence>
<organism>
    <name type="scientific">Human papillomavirus 51</name>
    <dbReference type="NCBI Taxonomy" id="10595"/>
    <lineage>
        <taxon>Viruses</taxon>
        <taxon>Monodnaviria</taxon>
        <taxon>Shotokuvirae</taxon>
        <taxon>Cossaviricota</taxon>
        <taxon>Papovaviricetes</taxon>
        <taxon>Zurhausenvirales</taxon>
        <taxon>Papillomaviridae</taxon>
        <taxon>Firstpapillomavirinae</taxon>
        <taxon>Alphapapillomavirus</taxon>
        <taxon>Alphapapillomavirus 5</taxon>
    </lineage>
</organism>
<name>VL2_HPV51</name>
<reference key="1">
    <citation type="journal article" date="1991" name="J. Virol.">
        <title>Biologic properties and nucleotide sequence analysis of human papillomavirus type 51.</title>
        <authorList>
            <person name="Lungu O."/>
            <person name="Crum C.P."/>
            <person name="Silverstein S.J."/>
        </authorList>
    </citation>
    <scope>NUCLEOTIDE SEQUENCE [GENOMIC DNA]</scope>
</reference>
<dbReference type="EMBL" id="M62877">
    <property type="status" value="NOT_ANNOTATED_CDS"/>
    <property type="molecule type" value="Genomic_DNA"/>
</dbReference>
<dbReference type="PIR" id="H40415">
    <property type="entry name" value="P2WL51"/>
</dbReference>
<dbReference type="Proteomes" id="UP000009125">
    <property type="component" value="Segment"/>
</dbReference>
<dbReference type="GO" id="GO:0043657">
    <property type="term" value="C:host cell"/>
    <property type="evidence" value="ECO:0007669"/>
    <property type="project" value="GOC"/>
</dbReference>
<dbReference type="GO" id="GO:0044174">
    <property type="term" value="C:host cell endosome"/>
    <property type="evidence" value="ECO:0007669"/>
    <property type="project" value="UniProtKB-KW"/>
</dbReference>
<dbReference type="GO" id="GO:0044177">
    <property type="term" value="C:host cell Golgi apparatus"/>
    <property type="evidence" value="ECO:0007669"/>
    <property type="project" value="UniProtKB-SubCell"/>
</dbReference>
<dbReference type="GO" id="GO:0042025">
    <property type="term" value="C:host cell nucleus"/>
    <property type="evidence" value="ECO:0007669"/>
    <property type="project" value="UniProtKB-SubCell"/>
</dbReference>
<dbReference type="GO" id="GO:0019028">
    <property type="term" value="C:viral capsid"/>
    <property type="evidence" value="ECO:0007669"/>
    <property type="project" value="UniProtKB-UniRule"/>
</dbReference>
<dbReference type="GO" id="GO:0003677">
    <property type="term" value="F:DNA binding"/>
    <property type="evidence" value="ECO:0007669"/>
    <property type="project" value="UniProtKB-UniRule"/>
</dbReference>
<dbReference type="GO" id="GO:0005198">
    <property type="term" value="F:structural molecule activity"/>
    <property type="evidence" value="ECO:0007669"/>
    <property type="project" value="UniProtKB-UniRule"/>
</dbReference>
<dbReference type="GO" id="GO:0075521">
    <property type="term" value="P:microtubule-dependent intracellular transport of viral material towards nucleus"/>
    <property type="evidence" value="ECO:0007669"/>
    <property type="project" value="UniProtKB-UniRule"/>
</dbReference>
<dbReference type="GO" id="GO:0046718">
    <property type="term" value="P:symbiont entry into host cell"/>
    <property type="evidence" value="ECO:0007669"/>
    <property type="project" value="UniProtKB-KW"/>
</dbReference>
<dbReference type="GO" id="GO:0075732">
    <property type="term" value="P:viral penetration into host nucleus"/>
    <property type="evidence" value="ECO:0007669"/>
    <property type="project" value="UniProtKB-KW"/>
</dbReference>
<dbReference type="HAMAP" id="MF_04003">
    <property type="entry name" value="PPV_L2"/>
    <property type="match status" value="1"/>
</dbReference>
<dbReference type="InterPro" id="IPR000784">
    <property type="entry name" value="Late_L2"/>
</dbReference>
<dbReference type="Pfam" id="PF00513">
    <property type="entry name" value="Late_protein_L2"/>
    <property type="match status" value="1"/>
</dbReference>
<proteinExistence type="inferred from homology"/>
<feature type="chain" id="PRO_0000133617" description="Minor capsid protein L2">
    <location>
        <begin position="1"/>
        <end position="468"/>
    </location>
</feature>
<feature type="short sequence motif" description="Nuclear localization signal" evidence="1">
    <location>
        <begin position="1"/>
        <end position="12"/>
    </location>
</feature>
<feature type="short sequence motif" description="Nuclear localization signal" evidence="1">
    <location>
        <begin position="449"/>
        <end position="457"/>
    </location>
</feature>
<feature type="disulfide bond" evidence="1">
    <location>
        <begin position="21"/>
        <end position="27"/>
    </location>
</feature>
<accession>P26539</accession>
<gene>
    <name evidence="1" type="primary">L2</name>
</gene>
<protein>
    <recommendedName>
        <fullName evidence="1">Minor capsid protein L2</fullName>
    </recommendedName>
</protein>
<organismHost>
    <name type="scientific">Homo sapiens</name>
    <name type="common">Human</name>
    <dbReference type="NCBI Taxonomy" id="9606"/>
</organismHost>